<comment type="catalytic activity">
    <reaction evidence="1">
        <text>2-formamido-N(1)-(5-O-phospho-beta-D-ribosyl)acetamidine + ATP = 5-amino-1-(5-phospho-beta-D-ribosyl)imidazole + ADP + phosphate + H(+)</text>
        <dbReference type="Rhea" id="RHEA:23032"/>
        <dbReference type="ChEBI" id="CHEBI:15378"/>
        <dbReference type="ChEBI" id="CHEBI:30616"/>
        <dbReference type="ChEBI" id="CHEBI:43474"/>
        <dbReference type="ChEBI" id="CHEBI:137981"/>
        <dbReference type="ChEBI" id="CHEBI:147287"/>
        <dbReference type="ChEBI" id="CHEBI:456216"/>
        <dbReference type="EC" id="6.3.3.1"/>
    </reaction>
</comment>
<comment type="pathway">
    <text evidence="1">Purine metabolism; IMP biosynthesis via de novo pathway; 5-amino-1-(5-phospho-D-ribosyl)imidazole from N(2)-formyl-N(1)-(5-phospho-D-ribosyl)glycinamide: step 2/2.</text>
</comment>
<comment type="subcellular location">
    <subcellularLocation>
        <location evidence="1">Cytoplasm</location>
    </subcellularLocation>
</comment>
<comment type="similarity">
    <text evidence="1">Belongs to the AIR synthase family.</text>
</comment>
<dbReference type="EC" id="6.3.3.1" evidence="1"/>
<dbReference type="EMBL" id="BA000028">
    <property type="protein sequence ID" value="BAC12703.1"/>
    <property type="molecule type" value="Genomic_DNA"/>
</dbReference>
<dbReference type="RefSeq" id="WP_011065155.1">
    <property type="nucleotide sequence ID" value="NC_004193.1"/>
</dbReference>
<dbReference type="SMR" id="Q8ES94"/>
<dbReference type="STRING" id="221109.gene:10732968"/>
<dbReference type="KEGG" id="oih:OB0747"/>
<dbReference type="eggNOG" id="COG0150">
    <property type="taxonomic scope" value="Bacteria"/>
</dbReference>
<dbReference type="HOGENOM" id="CLU_047116_0_0_9"/>
<dbReference type="OrthoDB" id="9802507at2"/>
<dbReference type="PhylomeDB" id="Q8ES94"/>
<dbReference type="UniPathway" id="UPA00074">
    <property type="reaction ID" value="UER00129"/>
</dbReference>
<dbReference type="Proteomes" id="UP000000822">
    <property type="component" value="Chromosome"/>
</dbReference>
<dbReference type="GO" id="GO:0005829">
    <property type="term" value="C:cytosol"/>
    <property type="evidence" value="ECO:0007669"/>
    <property type="project" value="TreeGrafter"/>
</dbReference>
<dbReference type="GO" id="GO:0005524">
    <property type="term" value="F:ATP binding"/>
    <property type="evidence" value="ECO:0007669"/>
    <property type="project" value="UniProtKB-KW"/>
</dbReference>
<dbReference type="GO" id="GO:0004637">
    <property type="term" value="F:phosphoribosylamine-glycine ligase activity"/>
    <property type="evidence" value="ECO:0007669"/>
    <property type="project" value="TreeGrafter"/>
</dbReference>
<dbReference type="GO" id="GO:0004641">
    <property type="term" value="F:phosphoribosylformylglycinamidine cyclo-ligase activity"/>
    <property type="evidence" value="ECO:0007669"/>
    <property type="project" value="UniProtKB-UniRule"/>
</dbReference>
<dbReference type="GO" id="GO:0006189">
    <property type="term" value="P:'de novo' IMP biosynthetic process"/>
    <property type="evidence" value="ECO:0007669"/>
    <property type="project" value="UniProtKB-UniRule"/>
</dbReference>
<dbReference type="GO" id="GO:0046084">
    <property type="term" value="P:adenine biosynthetic process"/>
    <property type="evidence" value="ECO:0007669"/>
    <property type="project" value="TreeGrafter"/>
</dbReference>
<dbReference type="CDD" id="cd02196">
    <property type="entry name" value="PurM"/>
    <property type="match status" value="1"/>
</dbReference>
<dbReference type="FunFam" id="3.30.1330.10:FF:000001">
    <property type="entry name" value="Phosphoribosylformylglycinamidine cyclo-ligase"/>
    <property type="match status" value="1"/>
</dbReference>
<dbReference type="FunFam" id="3.90.650.10:FF:000001">
    <property type="entry name" value="Phosphoribosylformylglycinamidine cyclo-ligase"/>
    <property type="match status" value="1"/>
</dbReference>
<dbReference type="Gene3D" id="3.90.650.10">
    <property type="entry name" value="PurM-like C-terminal domain"/>
    <property type="match status" value="1"/>
</dbReference>
<dbReference type="Gene3D" id="3.30.1330.10">
    <property type="entry name" value="PurM-like, N-terminal domain"/>
    <property type="match status" value="1"/>
</dbReference>
<dbReference type="HAMAP" id="MF_00741">
    <property type="entry name" value="AIRS"/>
    <property type="match status" value="1"/>
</dbReference>
<dbReference type="InterPro" id="IPR010918">
    <property type="entry name" value="PurM-like_C_dom"/>
</dbReference>
<dbReference type="InterPro" id="IPR036676">
    <property type="entry name" value="PurM-like_C_sf"/>
</dbReference>
<dbReference type="InterPro" id="IPR016188">
    <property type="entry name" value="PurM-like_N"/>
</dbReference>
<dbReference type="InterPro" id="IPR036921">
    <property type="entry name" value="PurM-like_N_sf"/>
</dbReference>
<dbReference type="InterPro" id="IPR004733">
    <property type="entry name" value="PurM_cligase"/>
</dbReference>
<dbReference type="NCBIfam" id="TIGR00878">
    <property type="entry name" value="purM"/>
    <property type="match status" value="1"/>
</dbReference>
<dbReference type="PANTHER" id="PTHR10520:SF12">
    <property type="entry name" value="TRIFUNCTIONAL PURINE BIOSYNTHETIC PROTEIN ADENOSINE-3"/>
    <property type="match status" value="1"/>
</dbReference>
<dbReference type="PANTHER" id="PTHR10520">
    <property type="entry name" value="TRIFUNCTIONAL PURINE BIOSYNTHETIC PROTEIN ADENOSINE-3-RELATED"/>
    <property type="match status" value="1"/>
</dbReference>
<dbReference type="Pfam" id="PF00586">
    <property type="entry name" value="AIRS"/>
    <property type="match status" value="1"/>
</dbReference>
<dbReference type="Pfam" id="PF02769">
    <property type="entry name" value="AIRS_C"/>
    <property type="match status" value="1"/>
</dbReference>
<dbReference type="SUPFAM" id="SSF56042">
    <property type="entry name" value="PurM C-terminal domain-like"/>
    <property type="match status" value="1"/>
</dbReference>
<dbReference type="SUPFAM" id="SSF55326">
    <property type="entry name" value="PurM N-terminal domain-like"/>
    <property type="match status" value="1"/>
</dbReference>
<protein>
    <recommendedName>
        <fullName evidence="1">Phosphoribosylformylglycinamidine cyclo-ligase</fullName>
        <ecNumber evidence="1">6.3.3.1</ecNumber>
    </recommendedName>
    <alternativeName>
        <fullName evidence="1">AIR synthase</fullName>
    </alternativeName>
    <alternativeName>
        <fullName evidence="1">AIRS</fullName>
    </alternativeName>
    <alternativeName>
        <fullName evidence="1">Phosphoribosyl-aminoimidazole synthetase</fullName>
    </alternativeName>
</protein>
<sequence length="339" mass="36326">MSEVYKQAGVDVEKGYEAVERLKKHVARTHRPEVLGGIGAFAGAFDLSSLQYKEPVLLSGTDGVGTKLKLAIDLDKHDTVGIDLVAMCVNDIIAQGGDPLFFLDYIACGENDPSRIEAIVSGIAEGCEQAGAALIGGETAEMPGMYDPDEYDLAGFVVGIVEKSAMITGKDIKSGDVVIGLSSSGIHSNGYSLVRKLIADVDLNQTYPGLSQTVKDAVMAPTKIYAKSIQALKKEVNLKGISHITGGGFDENIPRMLPDGLGVLIETNSWDIPEVFHFLEEKGNIDNREMYGVFNMGIGMAVVVAEEDVSIALQLLEKVDEQAYVIGKVTEEEGVHFTL</sequence>
<gene>
    <name evidence="1" type="primary">purM</name>
    <name type="ordered locus">OB0747</name>
</gene>
<feature type="chain" id="PRO_0000148227" description="Phosphoribosylformylglycinamidine cyclo-ligase">
    <location>
        <begin position="1"/>
        <end position="339"/>
    </location>
</feature>
<proteinExistence type="inferred from homology"/>
<reference key="1">
    <citation type="journal article" date="2002" name="Nucleic Acids Res.">
        <title>Genome sequence of Oceanobacillus iheyensis isolated from the Iheya Ridge and its unexpected adaptive capabilities to extreme environments.</title>
        <authorList>
            <person name="Takami H."/>
            <person name="Takaki Y."/>
            <person name="Uchiyama I."/>
        </authorList>
    </citation>
    <scope>NUCLEOTIDE SEQUENCE [LARGE SCALE GENOMIC DNA]</scope>
    <source>
        <strain>DSM 14371 / CIP 107618 / JCM 11309 / KCTC 3954 / HTE831</strain>
    </source>
</reference>
<accession>Q8ES94</accession>
<keyword id="KW-0067">ATP-binding</keyword>
<keyword id="KW-0963">Cytoplasm</keyword>
<keyword id="KW-0436">Ligase</keyword>
<keyword id="KW-0547">Nucleotide-binding</keyword>
<keyword id="KW-0658">Purine biosynthesis</keyword>
<keyword id="KW-1185">Reference proteome</keyword>
<evidence type="ECO:0000255" key="1">
    <source>
        <dbReference type="HAMAP-Rule" id="MF_00741"/>
    </source>
</evidence>
<name>PUR5_OCEIH</name>
<organism>
    <name type="scientific">Oceanobacillus iheyensis (strain DSM 14371 / CIP 107618 / JCM 11309 / KCTC 3954 / HTE831)</name>
    <dbReference type="NCBI Taxonomy" id="221109"/>
    <lineage>
        <taxon>Bacteria</taxon>
        <taxon>Bacillati</taxon>
        <taxon>Bacillota</taxon>
        <taxon>Bacilli</taxon>
        <taxon>Bacillales</taxon>
        <taxon>Bacillaceae</taxon>
        <taxon>Oceanobacillus</taxon>
    </lineage>
</organism>